<reference key="1">
    <citation type="journal article" date="1981" name="Proc. Natl. Acad. Sci. U.S.A.">
        <title>Sequence relationships among the hemagglutinin genes of 12 subtypes of influenza A virus.</title>
        <authorList>
            <person name="Air G.M."/>
        </authorList>
    </citation>
    <scope>NUCLEOTIDE SEQUENCE [GENOMIC RNA]</scope>
</reference>
<keyword id="KW-1167">Clathrin- and caveolin-independent endocytosis of virus by host</keyword>
<keyword id="KW-1165">Clathrin-mediated endocytosis of virus by host</keyword>
<keyword id="KW-1015">Disulfide bond</keyword>
<keyword id="KW-1170">Fusion of virus membrane with host endosomal membrane</keyword>
<keyword id="KW-1168">Fusion of virus membrane with host membrane</keyword>
<keyword id="KW-0325">Glycoprotein</keyword>
<keyword id="KW-0348">Hemagglutinin</keyword>
<keyword id="KW-1032">Host cell membrane</keyword>
<keyword id="KW-1043">Host membrane</keyword>
<keyword id="KW-0945">Host-virus interaction</keyword>
<keyword id="KW-0449">Lipoprotein</keyword>
<keyword id="KW-0472">Membrane</keyword>
<keyword id="KW-0564">Palmitate</keyword>
<keyword id="KW-0732">Signal</keyword>
<keyword id="KW-0812">Transmembrane</keyword>
<keyword id="KW-1161">Viral attachment to host cell</keyword>
<keyword id="KW-0261">Viral envelope protein</keyword>
<keyword id="KW-1162">Viral penetration into host cytoplasm</keyword>
<keyword id="KW-0946">Virion</keyword>
<keyword id="KW-1164">Virus endocytosis by host</keyword>
<keyword id="KW-1160">Virus entry into host cell</keyword>
<organism>
    <name type="scientific">Influenza A virus (strain A/Duck/Manitoba/1/1953 H10N7)</name>
    <dbReference type="NCBI Taxonomy" id="383555"/>
    <lineage>
        <taxon>Viruses</taxon>
        <taxon>Riboviria</taxon>
        <taxon>Orthornavirae</taxon>
        <taxon>Negarnaviricota</taxon>
        <taxon>Polyploviricotina</taxon>
        <taxon>Insthoviricetes</taxon>
        <taxon>Articulavirales</taxon>
        <taxon>Orthomyxoviridae</taxon>
        <taxon>Alphainfluenzavirus</taxon>
        <taxon>Alphainfluenzavirus influenzae</taxon>
        <taxon>Influenza A virus</taxon>
    </lineage>
</organism>
<evidence type="ECO:0000250" key="1"/>
<evidence type="ECO:0000255" key="2"/>
<evidence type="ECO:0000305" key="3"/>
<gene>
    <name type="primary">HA</name>
</gene>
<proteinExistence type="inferred from homology"/>
<feature type="signal peptide" evidence="2">
    <location>
        <begin position="1"/>
        <end position="17"/>
    </location>
</feature>
<feature type="chain" id="PRO_0000038941" description="Hemagglutinin HA1 chain">
    <location>
        <begin position="18"/>
        <end position="106" status="greater than"/>
    </location>
</feature>
<feature type="glycosylation site" description="N-linked (GlcNAc...) asparagine; by host" evidence="2">
    <location>
        <position position="45"/>
    </location>
</feature>
<feature type="non-terminal residue">
    <location>
        <position position="106"/>
    </location>
</feature>
<dbReference type="EMBL" id="J02110">
    <property type="protein sequence ID" value="AAA43186.1"/>
    <property type="molecule type" value="Genomic_RNA"/>
</dbReference>
<dbReference type="SMR" id="P03444"/>
<dbReference type="GlyCosmos" id="P03444">
    <property type="glycosylation" value="1 site, No reported glycans"/>
</dbReference>
<dbReference type="GO" id="GO:0020002">
    <property type="term" value="C:host cell plasma membrane"/>
    <property type="evidence" value="ECO:0007669"/>
    <property type="project" value="UniProtKB-SubCell"/>
</dbReference>
<dbReference type="GO" id="GO:0016020">
    <property type="term" value="C:membrane"/>
    <property type="evidence" value="ECO:0007669"/>
    <property type="project" value="UniProtKB-KW"/>
</dbReference>
<dbReference type="GO" id="GO:0019031">
    <property type="term" value="C:viral envelope"/>
    <property type="evidence" value="ECO:0007669"/>
    <property type="project" value="UniProtKB-KW"/>
</dbReference>
<dbReference type="GO" id="GO:0055036">
    <property type="term" value="C:virion membrane"/>
    <property type="evidence" value="ECO:0007669"/>
    <property type="project" value="UniProtKB-SubCell"/>
</dbReference>
<dbReference type="GO" id="GO:0046789">
    <property type="term" value="F:host cell surface receptor binding"/>
    <property type="evidence" value="ECO:0007669"/>
    <property type="project" value="InterPro"/>
</dbReference>
<dbReference type="GO" id="GO:0075512">
    <property type="term" value="P:clathrin-dependent endocytosis of virus by host cell"/>
    <property type="evidence" value="ECO:0007669"/>
    <property type="project" value="UniProtKB-KW"/>
</dbReference>
<dbReference type="GO" id="GO:0039654">
    <property type="term" value="P:fusion of virus membrane with host endosome membrane"/>
    <property type="evidence" value="ECO:0007669"/>
    <property type="project" value="UniProtKB-KW"/>
</dbReference>
<dbReference type="GO" id="GO:0019064">
    <property type="term" value="P:fusion of virus membrane with host plasma membrane"/>
    <property type="evidence" value="ECO:0007669"/>
    <property type="project" value="InterPro"/>
</dbReference>
<dbReference type="GO" id="GO:0019062">
    <property type="term" value="P:virion attachment to host cell"/>
    <property type="evidence" value="ECO:0007669"/>
    <property type="project" value="UniProtKB-KW"/>
</dbReference>
<dbReference type="Gene3D" id="3.90.209.20">
    <property type="match status" value="1"/>
</dbReference>
<dbReference type="Gene3D" id="2.10.77.10">
    <property type="entry name" value="Hemagglutinin Chain A, Domain 2"/>
    <property type="match status" value="1"/>
</dbReference>
<dbReference type="InterPro" id="IPR008980">
    <property type="entry name" value="Capsid_hemagglutn"/>
</dbReference>
<dbReference type="InterPro" id="IPR013828">
    <property type="entry name" value="Hemagglutn_HA1_a/b_dom_sf"/>
</dbReference>
<dbReference type="InterPro" id="IPR000149">
    <property type="entry name" value="Hemagglutn_influenz_A"/>
</dbReference>
<dbReference type="InterPro" id="IPR001364">
    <property type="entry name" value="Hemagglutn_influenz_A/B"/>
</dbReference>
<dbReference type="Pfam" id="PF00509">
    <property type="entry name" value="Hemagglutinin"/>
    <property type="match status" value="1"/>
</dbReference>
<dbReference type="PRINTS" id="PR00330">
    <property type="entry name" value="HEMAGGLUTN1"/>
</dbReference>
<dbReference type="SUPFAM" id="SSF49818">
    <property type="entry name" value="Viral protein domain"/>
    <property type="match status" value="1"/>
</dbReference>
<protein>
    <recommendedName>
        <fullName>Hemagglutinin</fullName>
    </recommendedName>
    <component>
        <recommendedName>
            <fullName>Hemagglutinin HA1 chain</fullName>
        </recommendedName>
    </component>
</protein>
<organismHost>
    <name type="scientific">Anatidae</name>
    <name type="common">waterfowl</name>
    <dbReference type="NCBI Taxonomy" id="8830"/>
</organismHost>
<organismHost>
    <name type="scientific">Gallus gallus</name>
    <name type="common">Chicken</name>
    <dbReference type="NCBI Taxonomy" id="9031"/>
</organismHost>
<name>HEMA_I53A0</name>
<comment type="function">
    <text>Binds to sialic acid-containing receptors on the cell surface, bringing about the attachment of the virus particle to the cell. This attachment induces virion internalization of about two third of the virus particles through clathrin-dependent endocytosis and about one third through a clathrin- and caveolin-independent pathway. Plays a major role in the determination of host range restriction and virulence. Class I viral fusion protein. Responsible for penetration of the virus into the cell cytoplasm by mediating the fusion of the membrane of the endocytosed virus particle with the endosomal membrane. Low pH in endosomes induces an irreversible conformational change in HA2, releasing the fusion hydrophobic peptide. Several trimers are required to form a competent fusion pore.</text>
</comment>
<comment type="subunit">
    <text>Homotrimer of disulfide-linked HA1-HA2.</text>
</comment>
<comment type="subcellular location">
    <subcellularLocation>
        <location evidence="3">Virion membrane</location>
        <topology evidence="3">Single-pass type I membrane protein</topology>
    </subcellularLocation>
    <subcellularLocation>
        <location>Host apical cell membrane</location>
        <topology>Single-pass type I membrane protein</topology>
    </subcellularLocation>
    <text>Targeted to the apical plasma membrane in epithelial polarized cells through a signal present in the transmembrane domain. Associated with glycosphingolipid- and cholesterol-enriched detergent-resistant lipid rafts.</text>
</comment>
<comment type="PTM">
    <text evidence="1">In natural infection, inactive HA is matured into HA1 and HA2 outside the cell by one or more trypsin-like, arginine-specific endoprotease secreted by the bronchial epithelial cells. One identified protease that may be involved in this process is secreted in lungs by club cells (By similarity).</text>
</comment>
<comment type="PTM">
    <text evidence="1">Palmitoylated.</text>
</comment>
<comment type="miscellaneous">
    <text>Major glycoprotein, comprises over 80% of the envelope proteins present in virus particle.</text>
</comment>
<comment type="miscellaneous">
    <text>The extent of infection into host organism is determined by HA. Influenza viruses bud from the apical surface of polarized epithelial cells (e.g. bronchial epithelial cells) into lumen of lungs and are therefore usually pneumotropic. The reason is that HA is cleaved by tryptase clara which is restricted to lungs. However, HAs of H5 and H7 pantropic avian viruses subtypes can be cleaved by furin and subtilisin-type enzymes, allowing the virus to grow in other organs than lungs.</text>
</comment>
<comment type="miscellaneous">
    <text>The influenza A genome consist of 8 RNA segments. Genetic variation of hemagglutinin and/or neuraminidase genes results in the emergence of new influenza strains. The mechanism of variation can be the result of point mutations or the result of genetic reassortment between segments of two different strains.</text>
</comment>
<comment type="similarity">
    <text evidence="3">Belongs to the influenza viruses hemagglutinin family.</text>
</comment>
<sequence>MYKIVLVLTLFGAVNGLDKICLGHHAVPNGIIVKTLTNEKEEVTNATETVESKTLDRLCMKGRKYKDLGNCHPIGIIIGAPACDLHLTGRWETLIERENSIAYCYP</sequence>
<accession>P03444</accession>